<sequence length="300" mass="32294">MKIAILSRDGTLYSCKRLREAAMRRGHLVEILDPLSCYMNINPAASSIHYKGRRLPHFDAVIPRIGSAITFYGTAALRQFELLGSYPLNESVAITRARDKLRSLQLLARQGIDLPITGIAHSPDDTSDLIKMVGGAPLVVKLVEGTQGIGVVLAETRQAAESVIDAFRGLNAHILVQEYIAEAKGCDIRCLVVGNEVVAAIERCAKAGDFRSNLHRGGVASIATITPRERDIAIKAAQTLGLDVAGVDILRAARGPLVMEVNASPGLEGIEKTTGVDIAGRMIQWIERHATPEFCLKIGG</sequence>
<dbReference type="EC" id="6.3.2.-" evidence="1"/>
<dbReference type="EMBL" id="CP001113">
    <property type="protein sequence ID" value="ACF62168.1"/>
    <property type="molecule type" value="Genomic_DNA"/>
</dbReference>
<dbReference type="RefSeq" id="WP_000684361.1">
    <property type="nucleotide sequence ID" value="NZ_CCMR01000003.1"/>
</dbReference>
<dbReference type="SMR" id="B4T0D6"/>
<dbReference type="KEGG" id="see:SNSL254_A0948"/>
<dbReference type="HOGENOM" id="CLU_054353_0_1_6"/>
<dbReference type="Proteomes" id="UP000008824">
    <property type="component" value="Chromosome"/>
</dbReference>
<dbReference type="GO" id="GO:0005737">
    <property type="term" value="C:cytoplasm"/>
    <property type="evidence" value="ECO:0007669"/>
    <property type="project" value="TreeGrafter"/>
</dbReference>
<dbReference type="GO" id="GO:0005524">
    <property type="term" value="F:ATP binding"/>
    <property type="evidence" value="ECO:0007669"/>
    <property type="project" value="UniProtKB-UniRule"/>
</dbReference>
<dbReference type="GO" id="GO:0046872">
    <property type="term" value="F:metal ion binding"/>
    <property type="evidence" value="ECO:0007669"/>
    <property type="project" value="UniProtKB-KW"/>
</dbReference>
<dbReference type="GO" id="GO:0018169">
    <property type="term" value="F:ribosomal S6-glutamic acid ligase activity"/>
    <property type="evidence" value="ECO:0007669"/>
    <property type="project" value="UniProtKB-UniRule"/>
</dbReference>
<dbReference type="GO" id="GO:0036211">
    <property type="term" value="P:protein modification process"/>
    <property type="evidence" value="ECO:0007669"/>
    <property type="project" value="InterPro"/>
</dbReference>
<dbReference type="GO" id="GO:0009432">
    <property type="term" value="P:SOS response"/>
    <property type="evidence" value="ECO:0007669"/>
    <property type="project" value="TreeGrafter"/>
</dbReference>
<dbReference type="GO" id="GO:0006412">
    <property type="term" value="P:translation"/>
    <property type="evidence" value="ECO:0007669"/>
    <property type="project" value="UniProtKB-KW"/>
</dbReference>
<dbReference type="FunFam" id="3.40.50.20:FF:000004">
    <property type="entry name" value="Probable alpha-L-glutamate ligase"/>
    <property type="match status" value="1"/>
</dbReference>
<dbReference type="FunFam" id="3.30.1490.20:FF:000005">
    <property type="entry name" value="Probable alpha-L-glutamate ligase 1"/>
    <property type="match status" value="1"/>
</dbReference>
<dbReference type="FunFam" id="3.30.470.20:FF:000016">
    <property type="entry name" value="Ribosomal protein S6--L-glutamate ligase"/>
    <property type="match status" value="1"/>
</dbReference>
<dbReference type="Gene3D" id="3.40.50.20">
    <property type="match status" value="1"/>
</dbReference>
<dbReference type="Gene3D" id="3.30.1490.20">
    <property type="entry name" value="ATP-grasp fold, A domain"/>
    <property type="match status" value="1"/>
</dbReference>
<dbReference type="Gene3D" id="3.30.470.20">
    <property type="entry name" value="ATP-grasp fold, B domain"/>
    <property type="match status" value="1"/>
</dbReference>
<dbReference type="HAMAP" id="MF_01552">
    <property type="entry name" value="RimK"/>
    <property type="match status" value="1"/>
</dbReference>
<dbReference type="InterPro" id="IPR011761">
    <property type="entry name" value="ATP-grasp"/>
</dbReference>
<dbReference type="InterPro" id="IPR013651">
    <property type="entry name" value="ATP-grasp_RimK-type"/>
</dbReference>
<dbReference type="InterPro" id="IPR013815">
    <property type="entry name" value="ATP_grasp_subdomain_1"/>
</dbReference>
<dbReference type="InterPro" id="IPR023533">
    <property type="entry name" value="RimK"/>
</dbReference>
<dbReference type="InterPro" id="IPR041107">
    <property type="entry name" value="Rimk_N"/>
</dbReference>
<dbReference type="InterPro" id="IPR004666">
    <property type="entry name" value="Rp_bS6_RimK/Lys_biosynth_LsyX"/>
</dbReference>
<dbReference type="NCBIfam" id="NF007764">
    <property type="entry name" value="PRK10446.1"/>
    <property type="match status" value="1"/>
</dbReference>
<dbReference type="NCBIfam" id="TIGR00768">
    <property type="entry name" value="rimK_fam"/>
    <property type="match status" value="1"/>
</dbReference>
<dbReference type="PANTHER" id="PTHR21621:SF7">
    <property type="entry name" value="RIBOSOMAL PROTEIN BS6--L-GLUTAMATE LIGASE"/>
    <property type="match status" value="1"/>
</dbReference>
<dbReference type="PANTHER" id="PTHR21621">
    <property type="entry name" value="RIBOSOMAL PROTEIN S6 MODIFICATION PROTEIN"/>
    <property type="match status" value="1"/>
</dbReference>
<dbReference type="Pfam" id="PF08443">
    <property type="entry name" value="RimK"/>
    <property type="match status" value="1"/>
</dbReference>
<dbReference type="Pfam" id="PF18030">
    <property type="entry name" value="Rimk_N"/>
    <property type="match status" value="1"/>
</dbReference>
<dbReference type="SUPFAM" id="SSF56059">
    <property type="entry name" value="Glutathione synthetase ATP-binding domain-like"/>
    <property type="match status" value="1"/>
</dbReference>
<dbReference type="PROSITE" id="PS50975">
    <property type="entry name" value="ATP_GRASP"/>
    <property type="match status" value="1"/>
</dbReference>
<gene>
    <name evidence="1" type="primary">rimK</name>
    <name type="ordered locus">SNSL254_A0948</name>
</gene>
<evidence type="ECO:0000255" key="1">
    <source>
        <dbReference type="HAMAP-Rule" id="MF_01552"/>
    </source>
</evidence>
<feature type="chain" id="PRO_1000146946" description="Ribosomal protein bS6--L-glutamate ligase">
    <location>
        <begin position="1"/>
        <end position="300"/>
    </location>
</feature>
<feature type="domain" description="ATP-grasp" evidence="1">
    <location>
        <begin position="104"/>
        <end position="287"/>
    </location>
</feature>
<feature type="binding site" evidence="1">
    <location>
        <position position="141"/>
    </location>
    <ligand>
        <name>ATP</name>
        <dbReference type="ChEBI" id="CHEBI:30616"/>
    </ligand>
</feature>
<feature type="binding site" evidence="1">
    <location>
        <begin position="178"/>
        <end position="179"/>
    </location>
    <ligand>
        <name>ATP</name>
        <dbReference type="ChEBI" id="CHEBI:30616"/>
    </ligand>
</feature>
<feature type="binding site" evidence="1">
    <location>
        <position position="187"/>
    </location>
    <ligand>
        <name>ATP</name>
        <dbReference type="ChEBI" id="CHEBI:30616"/>
    </ligand>
</feature>
<feature type="binding site" evidence="1">
    <location>
        <begin position="211"/>
        <end position="213"/>
    </location>
    <ligand>
        <name>ATP</name>
        <dbReference type="ChEBI" id="CHEBI:30616"/>
    </ligand>
</feature>
<feature type="binding site" evidence="1">
    <location>
        <position position="248"/>
    </location>
    <ligand>
        <name>Mg(2+)</name>
        <dbReference type="ChEBI" id="CHEBI:18420"/>
        <label>1</label>
    </ligand>
</feature>
<feature type="binding site" evidence="1">
    <location>
        <position position="248"/>
    </location>
    <ligand>
        <name>Mn(2+)</name>
        <dbReference type="ChEBI" id="CHEBI:29035"/>
        <label>1</label>
    </ligand>
</feature>
<feature type="binding site" evidence="1">
    <location>
        <position position="260"/>
    </location>
    <ligand>
        <name>Mg(2+)</name>
        <dbReference type="ChEBI" id="CHEBI:18420"/>
        <label>1</label>
    </ligand>
</feature>
<feature type="binding site" evidence="1">
    <location>
        <position position="260"/>
    </location>
    <ligand>
        <name>Mg(2+)</name>
        <dbReference type="ChEBI" id="CHEBI:18420"/>
        <label>2</label>
    </ligand>
</feature>
<feature type="binding site" evidence="1">
    <location>
        <position position="260"/>
    </location>
    <ligand>
        <name>Mn(2+)</name>
        <dbReference type="ChEBI" id="CHEBI:29035"/>
        <label>1</label>
    </ligand>
</feature>
<feature type="binding site" evidence="1">
    <location>
        <position position="260"/>
    </location>
    <ligand>
        <name>Mn(2+)</name>
        <dbReference type="ChEBI" id="CHEBI:29035"/>
        <label>2</label>
    </ligand>
</feature>
<feature type="binding site" evidence="1">
    <location>
        <position position="262"/>
    </location>
    <ligand>
        <name>Mg(2+)</name>
        <dbReference type="ChEBI" id="CHEBI:18420"/>
        <label>2</label>
    </ligand>
</feature>
<feature type="binding site" evidence="1">
    <location>
        <position position="262"/>
    </location>
    <ligand>
        <name>Mn(2+)</name>
        <dbReference type="ChEBI" id="CHEBI:29035"/>
        <label>2</label>
    </ligand>
</feature>
<keyword id="KW-0067">ATP-binding</keyword>
<keyword id="KW-0436">Ligase</keyword>
<keyword id="KW-0460">Magnesium</keyword>
<keyword id="KW-0464">Manganese</keyword>
<keyword id="KW-0479">Metal-binding</keyword>
<keyword id="KW-0547">Nucleotide-binding</keyword>
<keyword id="KW-0648">Protein biosynthesis</keyword>
<name>RIMK_SALNS</name>
<proteinExistence type="inferred from homology"/>
<organism>
    <name type="scientific">Salmonella newport (strain SL254)</name>
    <dbReference type="NCBI Taxonomy" id="423368"/>
    <lineage>
        <taxon>Bacteria</taxon>
        <taxon>Pseudomonadati</taxon>
        <taxon>Pseudomonadota</taxon>
        <taxon>Gammaproteobacteria</taxon>
        <taxon>Enterobacterales</taxon>
        <taxon>Enterobacteriaceae</taxon>
        <taxon>Salmonella</taxon>
    </lineage>
</organism>
<comment type="function">
    <text evidence="1">An L-glutamate ligase that catalyzes the ATP-dependent post-translational addition of glutamate residues to the C-terminus of ribosomal protein bS6 (RpsF). Is also able to catalyze the synthesis of poly-alpha-glutamate in vitro, via ATP hydrolysis from unprotected glutamate as substrate. The number of glutamate residues added to either RpsF or to poly-alpha-glutamate changes with pH.</text>
</comment>
<comment type="cofactor">
    <cofactor evidence="1">
        <name>Mg(2+)</name>
        <dbReference type="ChEBI" id="CHEBI:18420"/>
    </cofactor>
    <cofactor evidence="1">
        <name>Mn(2+)</name>
        <dbReference type="ChEBI" id="CHEBI:29035"/>
    </cofactor>
    <text evidence="1">Binds 2 magnesium or manganese ions per subunit.</text>
</comment>
<comment type="similarity">
    <text evidence="1">Belongs to the RimK family.</text>
</comment>
<protein>
    <recommendedName>
        <fullName evidence="1">Ribosomal protein bS6--L-glutamate ligase</fullName>
        <ecNumber evidence="1">6.3.2.-</ecNumber>
    </recommendedName>
    <alternativeName>
        <fullName evidence="1">Poly-alpha-glutamate synthase</fullName>
    </alternativeName>
    <alternativeName>
        <fullName evidence="1">Ribosomal protein bS6 modification protein</fullName>
    </alternativeName>
</protein>
<reference key="1">
    <citation type="journal article" date="2011" name="J. Bacteriol.">
        <title>Comparative genomics of 28 Salmonella enterica isolates: evidence for CRISPR-mediated adaptive sublineage evolution.</title>
        <authorList>
            <person name="Fricke W.F."/>
            <person name="Mammel M.K."/>
            <person name="McDermott P.F."/>
            <person name="Tartera C."/>
            <person name="White D.G."/>
            <person name="Leclerc J.E."/>
            <person name="Ravel J."/>
            <person name="Cebula T.A."/>
        </authorList>
    </citation>
    <scope>NUCLEOTIDE SEQUENCE [LARGE SCALE GENOMIC DNA]</scope>
    <source>
        <strain>SL254</strain>
    </source>
</reference>
<accession>B4T0D6</accession>